<proteinExistence type="evidence at protein level"/>
<gene>
    <name type="primary">SREK1IP1</name>
    <name type="synonym">P18SRP</name>
    <name type="synonym">SFRS12IP1</name>
</gene>
<evidence type="ECO:0000250" key="1">
    <source>
        <dbReference type="UniProtKB" id="Q4V9W2"/>
    </source>
</evidence>
<evidence type="ECO:0000255" key="2">
    <source>
        <dbReference type="PROSITE-ProRule" id="PRU00047"/>
    </source>
</evidence>
<evidence type="ECO:0000256" key="3">
    <source>
        <dbReference type="SAM" id="MobiDB-lite"/>
    </source>
</evidence>
<evidence type="ECO:0000269" key="4">
    <source>
    </source>
</evidence>
<evidence type="ECO:0000305" key="5"/>
<evidence type="ECO:0007744" key="6">
    <source>
    </source>
</evidence>
<evidence type="ECO:0007744" key="7">
    <source>
    </source>
</evidence>
<evidence type="ECO:0007744" key="8">
    <source>
    </source>
</evidence>
<name>SR1IP_HUMAN</name>
<dbReference type="EMBL" id="AK094073">
    <property type="protein sequence ID" value="BAC04279.1"/>
    <property type="molecule type" value="mRNA"/>
</dbReference>
<dbReference type="EMBL" id="CH471137">
    <property type="protein sequence ID" value="EAW51368.1"/>
    <property type="molecule type" value="Genomic_DNA"/>
</dbReference>
<dbReference type="EMBL" id="BC108716">
    <property type="protein sequence ID" value="AAI08717.1"/>
    <property type="status" value="ALT_FRAME"/>
    <property type="molecule type" value="mRNA"/>
</dbReference>
<dbReference type="EMBL" id="BC127085">
    <property type="protein sequence ID" value="AAI27086.1"/>
    <property type="molecule type" value="mRNA"/>
</dbReference>
<dbReference type="EMBL" id="BC127086">
    <property type="protein sequence ID" value="AAI27087.1"/>
    <property type="molecule type" value="mRNA"/>
</dbReference>
<dbReference type="CCDS" id="CCDS34171.1"/>
<dbReference type="RefSeq" id="NP_776190.1">
    <property type="nucleotide sequence ID" value="NM_173829.4"/>
</dbReference>
<dbReference type="BioGRID" id="130175">
    <property type="interactions" value="69"/>
</dbReference>
<dbReference type="FunCoup" id="Q8N9Q2">
    <property type="interactions" value="405"/>
</dbReference>
<dbReference type="IntAct" id="Q8N9Q2">
    <property type="interactions" value="54"/>
</dbReference>
<dbReference type="STRING" id="9606.ENSP00000427401"/>
<dbReference type="GlyGen" id="Q8N9Q2">
    <property type="glycosylation" value="1 site, 1 O-linked glycan (1 site)"/>
</dbReference>
<dbReference type="iPTMnet" id="Q8N9Q2"/>
<dbReference type="PhosphoSitePlus" id="Q8N9Q2"/>
<dbReference type="BioMuta" id="SREK1IP1"/>
<dbReference type="DMDM" id="74729743"/>
<dbReference type="jPOST" id="Q8N9Q2"/>
<dbReference type="MassIVE" id="Q8N9Q2"/>
<dbReference type="PaxDb" id="9606-ENSP00000427401"/>
<dbReference type="PeptideAtlas" id="Q8N9Q2"/>
<dbReference type="ProteomicsDB" id="72573"/>
<dbReference type="Pumba" id="Q8N9Q2"/>
<dbReference type="Antibodypedia" id="23725">
    <property type="antibodies" value="48 antibodies from 15 providers"/>
</dbReference>
<dbReference type="DNASU" id="285672"/>
<dbReference type="Ensembl" id="ENST00000513458.9">
    <property type="protein sequence ID" value="ENSP00000427401.3"/>
    <property type="gene ID" value="ENSG00000153006.16"/>
</dbReference>
<dbReference type="GeneID" id="285672"/>
<dbReference type="KEGG" id="hsa:285672"/>
<dbReference type="MANE-Select" id="ENST00000513458.9">
    <property type="protein sequence ID" value="ENSP00000427401.3"/>
    <property type="RefSeq nucleotide sequence ID" value="NM_173829.4"/>
    <property type="RefSeq protein sequence ID" value="NP_776190.1"/>
</dbReference>
<dbReference type="UCSC" id="uc003jtk.4">
    <property type="organism name" value="human"/>
</dbReference>
<dbReference type="AGR" id="HGNC:26716"/>
<dbReference type="CTD" id="285672"/>
<dbReference type="DisGeNET" id="285672"/>
<dbReference type="GeneCards" id="SREK1IP1"/>
<dbReference type="HGNC" id="HGNC:26716">
    <property type="gene designation" value="SREK1IP1"/>
</dbReference>
<dbReference type="HPA" id="ENSG00000153006">
    <property type="expression patterns" value="Low tissue specificity"/>
</dbReference>
<dbReference type="neXtProt" id="NX_Q8N9Q2"/>
<dbReference type="OpenTargets" id="ENSG00000153006"/>
<dbReference type="PharmGKB" id="PA162402954"/>
<dbReference type="VEuPathDB" id="HostDB:ENSG00000153006"/>
<dbReference type="eggNOG" id="KOG2985">
    <property type="taxonomic scope" value="Eukaryota"/>
</dbReference>
<dbReference type="GeneTree" id="ENSGT00510000047710"/>
<dbReference type="HOGENOM" id="CLU_122662_0_0_1"/>
<dbReference type="InParanoid" id="Q8N9Q2"/>
<dbReference type="OMA" id="KHHKKRQ"/>
<dbReference type="OrthoDB" id="5596742at2759"/>
<dbReference type="PAN-GO" id="Q8N9Q2">
    <property type="GO annotations" value="0 GO annotations based on evolutionary models"/>
</dbReference>
<dbReference type="PhylomeDB" id="Q8N9Q2"/>
<dbReference type="TreeFam" id="TF318225"/>
<dbReference type="PathwayCommons" id="Q8N9Q2"/>
<dbReference type="SignaLink" id="Q8N9Q2"/>
<dbReference type="BioGRID-ORCS" id="285672">
    <property type="hits" value="40 hits in 1081 CRISPR screens"/>
</dbReference>
<dbReference type="ChiTaRS" id="SREK1IP1">
    <property type="organism name" value="human"/>
</dbReference>
<dbReference type="GenomeRNAi" id="285672"/>
<dbReference type="Pharos" id="Q8N9Q2">
    <property type="development level" value="Tdark"/>
</dbReference>
<dbReference type="PRO" id="PR:Q8N9Q2"/>
<dbReference type="Proteomes" id="UP000005640">
    <property type="component" value="Chromosome 5"/>
</dbReference>
<dbReference type="RNAct" id="Q8N9Q2">
    <property type="molecule type" value="protein"/>
</dbReference>
<dbReference type="Bgee" id="ENSG00000153006">
    <property type="expression patterns" value="Expressed in buccal mucosa cell and 210 other cell types or tissues"/>
</dbReference>
<dbReference type="GO" id="GO:0003676">
    <property type="term" value="F:nucleic acid binding"/>
    <property type="evidence" value="ECO:0007669"/>
    <property type="project" value="InterPro"/>
</dbReference>
<dbReference type="GO" id="GO:0008270">
    <property type="term" value="F:zinc ion binding"/>
    <property type="evidence" value="ECO:0007669"/>
    <property type="project" value="UniProtKB-KW"/>
</dbReference>
<dbReference type="GO" id="GO:0006397">
    <property type="term" value="P:mRNA processing"/>
    <property type="evidence" value="ECO:0007669"/>
    <property type="project" value="UniProtKB-KW"/>
</dbReference>
<dbReference type="GO" id="GO:0008380">
    <property type="term" value="P:RNA splicing"/>
    <property type="evidence" value="ECO:0007669"/>
    <property type="project" value="UniProtKB-KW"/>
</dbReference>
<dbReference type="InterPro" id="IPR001878">
    <property type="entry name" value="Znf_CCHC"/>
</dbReference>
<dbReference type="PANTHER" id="PTHR31437:SF1">
    <property type="entry name" value="PROTEIN SREK1IP1"/>
    <property type="match status" value="1"/>
</dbReference>
<dbReference type="PANTHER" id="PTHR31437">
    <property type="entry name" value="SREK1IP1 FAMILY MEMBER"/>
    <property type="match status" value="1"/>
</dbReference>
<dbReference type="Pfam" id="PF13917">
    <property type="entry name" value="zf-CCHC_3"/>
    <property type="match status" value="1"/>
</dbReference>
<dbReference type="PROSITE" id="PS50158">
    <property type="entry name" value="ZF_CCHC"/>
    <property type="match status" value="1"/>
</dbReference>
<feature type="chain" id="PRO_0000311922" description="Protein SREK1IP1">
    <location>
        <begin position="1"/>
        <end position="155"/>
    </location>
</feature>
<feature type="zinc finger region" description="CCHC-type" evidence="2">
    <location>
        <begin position="13"/>
        <end position="30"/>
    </location>
</feature>
<feature type="region of interest" description="Disordered" evidence="3">
    <location>
        <begin position="44"/>
        <end position="155"/>
    </location>
</feature>
<feature type="compositionally biased region" description="Basic and acidic residues" evidence="3">
    <location>
        <begin position="66"/>
        <end position="84"/>
    </location>
</feature>
<feature type="compositionally biased region" description="Basic residues" evidence="3">
    <location>
        <begin position="85"/>
        <end position="94"/>
    </location>
</feature>
<feature type="compositionally biased region" description="Basic residues" evidence="3">
    <location>
        <begin position="107"/>
        <end position="142"/>
    </location>
</feature>
<feature type="compositionally biased region" description="Polar residues" evidence="3">
    <location>
        <begin position="146"/>
        <end position="155"/>
    </location>
</feature>
<feature type="modified residue" description="Phosphoserine" evidence="7">
    <location>
        <position position="52"/>
    </location>
</feature>
<feature type="modified residue" description="Phosphoserine" evidence="1">
    <location>
        <position position="96"/>
    </location>
</feature>
<feature type="modified residue" description="Phosphoserine" evidence="1">
    <location>
        <position position="97"/>
    </location>
</feature>
<feature type="modified residue" description="Phosphothreonine" evidence="6 8">
    <location>
        <position position="146"/>
    </location>
</feature>
<reference key="1">
    <citation type="journal article" date="2004" name="Nat. Genet.">
        <title>Complete sequencing and characterization of 21,243 full-length human cDNAs.</title>
        <authorList>
            <person name="Ota T."/>
            <person name="Suzuki Y."/>
            <person name="Nishikawa T."/>
            <person name="Otsuki T."/>
            <person name="Sugiyama T."/>
            <person name="Irie R."/>
            <person name="Wakamatsu A."/>
            <person name="Hayashi K."/>
            <person name="Sato H."/>
            <person name="Nagai K."/>
            <person name="Kimura K."/>
            <person name="Makita H."/>
            <person name="Sekine M."/>
            <person name="Obayashi M."/>
            <person name="Nishi T."/>
            <person name="Shibahara T."/>
            <person name="Tanaka T."/>
            <person name="Ishii S."/>
            <person name="Yamamoto J."/>
            <person name="Saito K."/>
            <person name="Kawai Y."/>
            <person name="Isono Y."/>
            <person name="Nakamura Y."/>
            <person name="Nagahari K."/>
            <person name="Murakami K."/>
            <person name="Yasuda T."/>
            <person name="Iwayanagi T."/>
            <person name="Wagatsuma M."/>
            <person name="Shiratori A."/>
            <person name="Sudo H."/>
            <person name="Hosoiri T."/>
            <person name="Kaku Y."/>
            <person name="Kodaira H."/>
            <person name="Kondo H."/>
            <person name="Sugawara M."/>
            <person name="Takahashi M."/>
            <person name="Kanda K."/>
            <person name="Yokoi T."/>
            <person name="Furuya T."/>
            <person name="Kikkawa E."/>
            <person name="Omura Y."/>
            <person name="Abe K."/>
            <person name="Kamihara K."/>
            <person name="Katsuta N."/>
            <person name="Sato K."/>
            <person name="Tanikawa M."/>
            <person name="Yamazaki M."/>
            <person name="Ninomiya K."/>
            <person name="Ishibashi T."/>
            <person name="Yamashita H."/>
            <person name="Murakawa K."/>
            <person name="Fujimori K."/>
            <person name="Tanai H."/>
            <person name="Kimata M."/>
            <person name="Watanabe M."/>
            <person name="Hiraoka S."/>
            <person name="Chiba Y."/>
            <person name="Ishida S."/>
            <person name="Ono Y."/>
            <person name="Takiguchi S."/>
            <person name="Watanabe S."/>
            <person name="Yosida M."/>
            <person name="Hotuta T."/>
            <person name="Kusano J."/>
            <person name="Kanehori K."/>
            <person name="Takahashi-Fujii A."/>
            <person name="Hara H."/>
            <person name="Tanase T.-O."/>
            <person name="Nomura Y."/>
            <person name="Togiya S."/>
            <person name="Komai F."/>
            <person name="Hara R."/>
            <person name="Takeuchi K."/>
            <person name="Arita M."/>
            <person name="Imose N."/>
            <person name="Musashino K."/>
            <person name="Yuuki H."/>
            <person name="Oshima A."/>
            <person name="Sasaki N."/>
            <person name="Aotsuka S."/>
            <person name="Yoshikawa Y."/>
            <person name="Matsunawa H."/>
            <person name="Ichihara T."/>
            <person name="Shiohata N."/>
            <person name="Sano S."/>
            <person name="Moriya S."/>
            <person name="Momiyama H."/>
            <person name="Satoh N."/>
            <person name="Takami S."/>
            <person name="Terashima Y."/>
            <person name="Suzuki O."/>
            <person name="Nakagawa S."/>
            <person name="Senoh A."/>
            <person name="Mizoguchi H."/>
            <person name="Goto Y."/>
            <person name="Shimizu F."/>
            <person name="Wakebe H."/>
            <person name="Hishigaki H."/>
            <person name="Watanabe T."/>
            <person name="Sugiyama A."/>
            <person name="Takemoto M."/>
            <person name="Kawakami B."/>
            <person name="Yamazaki M."/>
            <person name="Watanabe K."/>
            <person name="Kumagai A."/>
            <person name="Itakura S."/>
            <person name="Fukuzumi Y."/>
            <person name="Fujimori Y."/>
            <person name="Komiyama M."/>
            <person name="Tashiro H."/>
            <person name="Tanigami A."/>
            <person name="Fujiwara T."/>
            <person name="Ono T."/>
            <person name="Yamada K."/>
            <person name="Fujii Y."/>
            <person name="Ozaki K."/>
            <person name="Hirao M."/>
            <person name="Ohmori Y."/>
            <person name="Kawabata A."/>
            <person name="Hikiji T."/>
            <person name="Kobatake N."/>
            <person name="Inagaki H."/>
            <person name="Ikema Y."/>
            <person name="Okamoto S."/>
            <person name="Okitani R."/>
            <person name="Kawakami T."/>
            <person name="Noguchi S."/>
            <person name="Itoh T."/>
            <person name="Shigeta K."/>
            <person name="Senba T."/>
            <person name="Matsumura K."/>
            <person name="Nakajima Y."/>
            <person name="Mizuno T."/>
            <person name="Morinaga M."/>
            <person name="Sasaki M."/>
            <person name="Togashi T."/>
            <person name="Oyama M."/>
            <person name="Hata H."/>
            <person name="Watanabe M."/>
            <person name="Komatsu T."/>
            <person name="Mizushima-Sugano J."/>
            <person name="Satoh T."/>
            <person name="Shirai Y."/>
            <person name="Takahashi Y."/>
            <person name="Nakagawa K."/>
            <person name="Okumura K."/>
            <person name="Nagase T."/>
            <person name="Nomura N."/>
            <person name="Kikuchi H."/>
            <person name="Masuho Y."/>
            <person name="Yamashita R."/>
            <person name="Nakai K."/>
            <person name="Yada T."/>
            <person name="Nakamura Y."/>
            <person name="Ohara O."/>
            <person name="Isogai T."/>
            <person name="Sugano S."/>
        </authorList>
    </citation>
    <scope>NUCLEOTIDE SEQUENCE [LARGE SCALE MRNA]</scope>
    <source>
        <tissue>Uterus</tissue>
    </source>
</reference>
<reference key="2">
    <citation type="submission" date="2005-09" db="EMBL/GenBank/DDBJ databases">
        <authorList>
            <person name="Mural R.J."/>
            <person name="Istrail S."/>
            <person name="Sutton G.G."/>
            <person name="Florea L."/>
            <person name="Halpern A.L."/>
            <person name="Mobarry C.M."/>
            <person name="Lippert R."/>
            <person name="Walenz B."/>
            <person name="Shatkay H."/>
            <person name="Dew I."/>
            <person name="Miller J.R."/>
            <person name="Flanigan M.J."/>
            <person name="Edwards N.J."/>
            <person name="Bolanos R."/>
            <person name="Fasulo D."/>
            <person name="Halldorsson B.V."/>
            <person name="Hannenhalli S."/>
            <person name="Turner R."/>
            <person name="Yooseph S."/>
            <person name="Lu F."/>
            <person name="Nusskern D.R."/>
            <person name="Shue B.C."/>
            <person name="Zheng X.H."/>
            <person name="Zhong F."/>
            <person name="Delcher A.L."/>
            <person name="Huson D.H."/>
            <person name="Kravitz S.A."/>
            <person name="Mouchard L."/>
            <person name="Reinert K."/>
            <person name="Remington K.A."/>
            <person name="Clark A.G."/>
            <person name="Waterman M.S."/>
            <person name="Eichler E.E."/>
            <person name="Adams M.D."/>
            <person name="Hunkapiller M.W."/>
            <person name="Myers E.W."/>
            <person name="Venter J.C."/>
        </authorList>
    </citation>
    <scope>NUCLEOTIDE SEQUENCE [LARGE SCALE GENOMIC DNA]</scope>
</reference>
<reference key="3">
    <citation type="journal article" date="2004" name="Genome Res.">
        <title>The status, quality, and expansion of the NIH full-length cDNA project: the Mammalian Gene Collection (MGC).</title>
        <authorList>
            <consortium name="The MGC Project Team"/>
        </authorList>
    </citation>
    <scope>NUCLEOTIDE SEQUENCE [LARGE SCALE MRNA]</scope>
    <source>
        <tissue>PNS</tissue>
    </source>
</reference>
<reference key="4">
    <citation type="journal article" date="2004" name="J. Mol. Neurosci.">
        <title>The splicing regulatory protein p18SRP is down-regulated in Alzheimer's disease brain.</title>
        <authorList>
            <person name="Heese K."/>
            <person name="Fujita M."/>
            <person name="Akatsu H."/>
            <person name="Yamamoto T."/>
            <person name="Kosaka K."/>
            <person name="Nagai Y."/>
            <person name="Sawada T."/>
        </authorList>
    </citation>
    <scope>POSSIBLE FUNCTION</scope>
    <scope>INDUCTION</scope>
    <scope>INTERACTION WITH SFRS12</scope>
</reference>
<reference key="5">
    <citation type="journal article" date="2008" name="Proc. Natl. Acad. Sci. U.S.A.">
        <title>A quantitative atlas of mitotic phosphorylation.</title>
        <authorList>
            <person name="Dephoure N."/>
            <person name="Zhou C."/>
            <person name="Villen J."/>
            <person name="Beausoleil S.A."/>
            <person name="Bakalarski C.E."/>
            <person name="Elledge S.J."/>
            <person name="Gygi S.P."/>
        </authorList>
    </citation>
    <scope>PHOSPHORYLATION [LARGE SCALE ANALYSIS] AT THR-146</scope>
    <scope>IDENTIFICATION BY MASS SPECTROMETRY [LARGE SCALE ANALYSIS]</scope>
    <source>
        <tissue>Cervix carcinoma</tissue>
    </source>
</reference>
<reference key="6">
    <citation type="journal article" date="2010" name="Sci. Signal.">
        <title>Quantitative phosphoproteomics reveals widespread full phosphorylation site occupancy during mitosis.</title>
        <authorList>
            <person name="Olsen J.V."/>
            <person name="Vermeulen M."/>
            <person name="Santamaria A."/>
            <person name="Kumar C."/>
            <person name="Miller M.L."/>
            <person name="Jensen L.J."/>
            <person name="Gnad F."/>
            <person name="Cox J."/>
            <person name="Jensen T.S."/>
            <person name="Nigg E.A."/>
            <person name="Brunak S."/>
            <person name="Mann M."/>
        </authorList>
    </citation>
    <scope>PHOSPHORYLATION [LARGE SCALE ANALYSIS] AT SER-52</scope>
    <scope>IDENTIFICATION BY MASS SPECTROMETRY [LARGE SCALE ANALYSIS]</scope>
    <source>
        <tissue>Cervix carcinoma</tissue>
    </source>
</reference>
<reference key="7">
    <citation type="journal article" date="2013" name="J. Proteome Res.">
        <title>Toward a comprehensive characterization of a human cancer cell phosphoproteome.</title>
        <authorList>
            <person name="Zhou H."/>
            <person name="Di Palma S."/>
            <person name="Preisinger C."/>
            <person name="Peng M."/>
            <person name="Polat A.N."/>
            <person name="Heck A.J."/>
            <person name="Mohammed S."/>
        </authorList>
    </citation>
    <scope>PHOSPHORYLATION [LARGE SCALE ANALYSIS] AT THR-146</scope>
    <scope>IDENTIFICATION BY MASS SPECTROMETRY [LARGE SCALE ANALYSIS]</scope>
    <source>
        <tissue>Cervix carcinoma</tissue>
        <tissue>Erythroleukemia</tissue>
    </source>
</reference>
<comment type="function">
    <text>Possible splicing regulator involved in the control of cellular survival.</text>
</comment>
<comment type="subunit">
    <text evidence="4">Interacts with SREK1/SFRS12.</text>
</comment>
<comment type="interaction">
    <interactant intactId="EBI-10268630">
        <id>Q8N9Q2</id>
    </interactant>
    <interactant intactId="EBI-2803601">
        <id>Q9NRZ7</id>
        <label>AGPAT3</label>
    </interactant>
    <organismsDiffer>false</organismsDiffer>
    <experiments>3</experiments>
</comment>
<comment type="interaction">
    <interactant intactId="EBI-10268630">
        <id>Q8N9Q2</id>
    </interactant>
    <interactant intactId="EBI-2836773">
        <id>Q9UK58</id>
        <label>CCNL1</label>
    </interactant>
    <organismsDiffer>false</organismsDiffer>
    <experiments>3</experiments>
</comment>
<comment type="interaction">
    <interactant intactId="EBI-10268630">
        <id>Q8N9Q2</id>
    </interactant>
    <interactant intactId="EBI-12051833">
        <id>Q5HYN5</id>
        <label>CT45A1</label>
    </interactant>
    <organismsDiffer>false</organismsDiffer>
    <experiments>3</experiments>
</comment>
<comment type="interaction">
    <interactant intactId="EBI-10268630">
        <id>Q8N9Q2</id>
    </interactant>
    <interactant intactId="EBI-742054">
        <id>Q96D03</id>
        <label>DDIT4L</label>
    </interactant>
    <organismsDiffer>false</organismsDiffer>
    <experiments>3</experiments>
</comment>
<comment type="interaction">
    <interactant intactId="EBI-10268630">
        <id>Q8N9Q2</id>
    </interactant>
    <interactant intactId="EBI-741705">
        <id>Q8IYF1</id>
        <label>ELOA2</label>
    </interactant>
    <organismsDiffer>false</organismsDiffer>
    <experiments>3</experiments>
</comment>
<comment type="interaction">
    <interactant intactId="EBI-10268630">
        <id>Q8N9Q2</id>
    </interactant>
    <interactant intactId="EBI-1035684">
        <id>O15520</id>
        <label>FGF10</label>
    </interactant>
    <organismsDiffer>false</organismsDiffer>
    <experiments>3</experiments>
</comment>
<comment type="interaction">
    <interactant intactId="EBI-10268630">
        <id>Q8N9Q2</id>
    </interactant>
    <interactant intactId="EBI-6380495">
        <id>Q92759</id>
        <label>GTF2H4</label>
    </interactant>
    <organismsDiffer>false</organismsDiffer>
    <experiments>3</experiments>
</comment>
<comment type="interaction">
    <interactant intactId="EBI-10268630">
        <id>Q8N9Q2</id>
    </interactant>
    <interactant intactId="EBI-12142839">
        <id>U3KQK0</id>
        <label>H2BC15</label>
    </interactant>
    <organismsDiffer>false</organismsDiffer>
    <experiments>3</experiments>
</comment>
<comment type="interaction">
    <interactant intactId="EBI-10268630">
        <id>Q8N9Q2</id>
    </interactant>
    <interactant intactId="EBI-748210">
        <id>P00492</id>
        <label>HPRT1</label>
    </interactant>
    <organismsDiffer>false</organismsDiffer>
    <experiments>3</experiments>
</comment>
<comment type="interaction">
    <interactant intactId="EBI-10268630">
        <id>Q8N9Q2</id>
    </interactant>
    <interactant intactId="EBI-742664">
        <id>Q9BPX1</id>
        <label>HSD17B14</label>
    </interactant>
    <organismsDiffer>false</organismsDiffer>
    <experiments>5</experiments>
</comment>
<comment type="interaction">
    <interactant intactId="EBI-10268630">
        <id>Q8N9Q2</id>
    </interactant>
    <interactant intactId="EBI-713507">
        <id>Q9NX58</id>
        <label>LYAR</label>
    </interactant>
    <organismsDiffer>false</organismsDiffer>
    <experiments>3</experiments>
</comment>
<comment type="interaction">
    <interactant intactId="EBI-10268630">
        <id>Q8N9Q2</id>
    </interactant>
    <interactant intactId="EBI-2868511">
        <id>O75367</id>
        <label>MACROH2A1</label>
    </interactant>
    <organismsDiffer>false</organismsDiffer>
    <experiments>3</experiments>
</comment>
<comment type="interaction">
    <interactant intactId="EBI-10268630">
        <id>Q8N9Q2</id>
    </interactant>
    <interactant intactId="EBI-3920396">
        <id>Q6ZUT1</id>
        <label>NKAPD1</label>
    </interactant>
    <organismsDiffer>false</organismsDiffer>
    <experiments>6</experiments>
</comment>
<comment type="interaction">
    <interactant intactId="EBI-10268630">
        <id>Q8N9Q2</id>
    </interactant>
    <interactant intactId="EBI-11423380">
        <id>Q5M9Q1</id>
        <label>NKAPL</label>
    </interactant>
    <organismsDiffer>false</organismsDiffer>
    <experiments>3</experiments>
</comment>
<comment type="interaction">
    <interactant intactId="EBI-10268630">
        <id>Q8N9Q2</id>
    </interactant>
    <interactant intactId="EBI-741141">
        <id>P15531</id>
        <label>NME1</label>
    </interactant>
    <organismsDiffer>false</organismsDiffer>
    <experiments>3</experiments>
</comment>
<comment type="interaction">
    <interactant intactId="EBI-10268630">
        <id>Q8N9Q2</id>
    </interactant>
    <interactant intactId="EBI-724333">
        <id>Q96CD2</id>
        <label>PPCDC</label>
    </interactant>
    <organismsDiffer>false</organismsDiffer>
    <experiments>3</experiments>
</comment>
<comment type="interaction">
    <interactant intactId="EBI-10268630">
        <id>Q8N9Q2</id>
    </interactant>
    <interactant intactId="EBI-5280197">
        <id>O75400-2</id>
        <label>PRPF40A</label>
    </interactant>
    <organismsDiffer>false</organismsDiffer>
    <experiments>3</experiments>
</comment>
<comment type="interaction">
    <interactant intactId="EBI-10268630">
        <id>Q8N9Q2</id>
    </interactant>
    <interactant intactId="EBI-740924">
        <id>Q9NZ81</id>
        <label>PRR13</label>
    </interactant>
    <organismsDiffer>false</organismsDiffer>
    <experiments>3</experiments>
</comment>
<comment type="interaction">
    <interactant intactId="EBI-10268630">
        <id>Q8N9Q2</id>
    </interactant>
    <interactant intactId="EBI-395290">
        <id>Q14498</id>
        <label>RBM39</label>
    </interactant>
    <organismsDiffer>false</organismsDiffer>
    <experiments>3</experiments>
</comment>
<comment type="interaction">
    <interactant intactId="EBI-10268630">
        <id>Q8N9Q2</id>
    </interactant>
    <interactant intactId="EBI-12002474">
        <id>Q2KHN1</id>
        <label>RNF151</label>
    </interactant>
    <organismsDiffer>false</organismsDiffer>
    <experiments>3</experiments>
</comment>
<comment type="interaction">
    <interactant intactId="EBI-10268630">
        <id>Q8N9Q2</id>
    </interactant>
    <interactant intactId="EBI-630339">
        <id>Q8TA86</id>
        <label>RP9</label>
    </interactant>
    <organismsDiffer>false</organismsDiffer>
    <experiments>3</experiments>
</comment>
<comment type="interaction">
    <interactant intactId="EBI-10268630">
        <id>Q8N9Q2</id>
    </interactant>
    <interactant intactId="EBI-358122">
        <id>P32969</id>
        <label>RPL9P9</label>
    </interactant>
    <organismsDiffer>false</organismsDiffer>
    <experiments>3</experiments>
</comment>
<comment type="interaction">
    <interactant intactId="EBI-10268630">
        <id>Q8N9Q2</id>
    </interactant>
    <interactant intactId="EBI-727004">
        <id>O00560</id>
        <label>SDCBP</label>
    </interactant>
    <organismsDiffer>false</organismsDiffer>
    <experiments>6</experiments>
</comment>
<comment type="interaction">
    <interactant intactId="EBI-10268630">
        <id>Q8N9Q2</id>
    </interactant>
    <interactant intactId="EBI-742426">
        <id>Q9H190</id>
        <label>SDCBP2</label>
    </interactant>
    <organismsDiffer>false</organismsDiffer>
    <experiments>6</experiments>
</comment>
<comment type="interaction">
    <interactant intactId="EBI-10268630">
        <id>Q8N9Q2</id>
    </interactant>
    <interactant intactId="EBI-12020542">
        <id>Q96LM5</id>
        <label>SPMIP2</label>
    </interactant>
    <organismsDiffer>false</organismsDiffer>
    <experiments>3</experiments>
</comment>
<comment type="interaction">
    <interactant intactId="EBI-10268630">
        <id>Q8N9Q2</id>
    </interactant>
    <interactant intactId="EBI-745680">
        <id>Q96MF2</id>
        <label>STAC3</label>
    </interactant>
    <organismsDiffer>false</organismsDiffer>
    <experiments>6</experiments>
</comment>
<comment type="interaction">
    <interactant intactId="EBI-10268630">
        <id>Q8N9Q2</id>
    </interactant>
    <interactant intactId="EBI-741515">
        <id>Q9NVV9</id>
        <label>THAP1</label>
    </interactant>
    <organismsDiffer>false</organismsDiffer>
    <experiments>3</experiments>
</comment>
<comment type="induction">
    <text evidence="4">Down-regulated in the brains of Alzheimer disease patients.</text>
</comment>
<comment type="sequence caution" evidence="5">
    <conflict type="frameshift">
        <sequence resource="EMBL-CDS" id="AAI08717"/>
    </conflict>
</comment>
<accession>Q8N9Q2</accession>
<accession>Q32NC8</accession>
<protein>
    <recommendedName>
        <fullName>Protein SREK1IP1</fullName>
    </recommendedName>
    <alternativeName>
        <fullName>SFRS12-interacting protein 1</fullName>
    </alternativeName>
    <alternativeName>
        <fullName>SREK1-interacting protein 1</fullName>
    </alternativeName>
    <alternativeName>
        <fullName>Splicing regulatory protein of 18 kDa</fullName>
        <shortName>p18SRP</shortName>
    </alternativeName>
</protein>
<keyword id="KW-0479">Metal-binding</keyword>
<keyword id="KW-0507">mRNA processing</keyword>
<keyword id="KW-0508">mRNA splicing</keyword>
<keyword id="KW-0597">Phosphoprotein</keyword>
<keyword id="KW-1267">Proteomics identification</keyword>
<keyword id="KW-1185">Reference proteome</keyword>
<keyword id="KW-0862">Zinc</keyword>
<keyword id="KW-0863">Zinc-finger</keyword>
<organism>
    <name type="scientific">Homo sapiens</name>
    <name type="common">Human</name>
    <dbReference type="NCBI Taxonomy" id="9606"/>
    <lineage>
        <taxon>Eukaryota</taxon>
        <taxon>Metazoa</taxon>
        <taxon>Chordata</taxon>
        <taxon>Craniata</taxon>
        <taxon>Vertebrata</taxon>
        <taxon>Euteleostomi</taxon>
        <taxon>Mammalia</taxon>
        <taxon>Eutheria</taxon>
        <taxon>Euarchontoglires</taxon>
        <taxon>Primates</taxon>
        <taxon>Haplorrhini</taxon>
        <taxon>Catarrhini</taxon>
        <taxon>Hominidae</taxon>
        <taxon>Homo</taxon>
    </lineage>
</organism>
<sequence>MAVPGCNKDSVRAGCKKCGYPGHLTFECRNFLRVDPKRDIVLDVSSTSSEDSDEENEELNKLQALQEKRINEEEEKKKEKSKEKIKLKKKRKRSYSSSSTEEDTSKQKKQKYQKKEKKKEKKSKSKKGKHHKKEKKKRKKEKHSSTPNSSEFSRK</sequence>